<protein>
    <recommendedName>
        <fullName evidence="1">Ribulose bisphosphate carboxylase large chain</fullName>
        <shortName evidence="1">RuBisCO large subunit</shortName>
        <ecNumber evidence="1">4.1.1.39</ecNumber>
    </recommendedName>
</protein>
<dbReference type="EC" id="4.1.1.39" evidence="1"/>
<dbReference type="EMBL" id="M34536">
    <property type="protein sequence ID" value="AAA27387.1"/>
    <property type="molecule type" value="Genomic_DNA"/>
</dbReference>
<dbReference type="PIR" id="A38262">
    <property type="entry name" value="A38262"/>
</dbReference>
<dbReference type="SMR" id="P24672"/>
<dbReference type="GO" id="GO:0000287">
    <property type="term" value="F:magnesium ion binding"/>
    <property type="evidence" value="ECO:0007669"/>
    <property type="project" value="UniProtKB-UniRule"/>
</dbReference>
<dbReference type="GO" id="GO:0004497">
    <property type="term" value="F:monooxygenase activity"/>
    <property type="evidence" value="ECO:0007669"/>
    <property type="project" value="UniProtKB-KW"/>
</dbReference>
<dbReference type="GO" id="GO:0016984">
    <property type="term" value="F:ribulose-bisphosphate carboxylase activity"/>
    <property type="evidence" value="ECO:0007669"/>
    <property type="project" value="UniProtKB-UniRule"/>
</dbReference>
<dbReference type="GO" id="GO:0019253">
    <property type="term" value="P:reductive pentose-phosphate cycle"/>
    <property type="evidence" value="ECO:0007669"/>
    <property type="project" value="UniProtKB-UniRule"/>
</dbReference>
<dbReference type="Gene3D" id="3.20.20.110">
    <property type="entry name" value="Ribulose bisphosphate carboxylase, large subunit, C-terminal domain"/>
    <property type="match status" value="1"/>
</dbReference>
<dbReference type="Gene3D" id="3.30.70.150">
    <property type="entry name" value="RuBisCO large subunit, N-terminal domain"/>
    <property type="match status" value="1"/>
</dbReference>
<dbReference type="HAMAP" id="MF_01338">
    <property type="entry name" value="RuBisCO_L_type1"/>
    <property type="match status" value="1"/>
</dbReference>
<dbReference type="InterPro" id="IPR033966">
    <property type="entry name" value="RuBisCO"/>
</dbReference>
<dbReference type="InterPro" id="IPR020878">
    <property type="entry name" value="RuBisCo_large_chain_AS"/>
</dbReference>
<dbReference type="InterPro" id="IPR000685">
    <property type="entry name" value="RuBisCO_lsu_C"/>
</dbReference>
<dbReference type="InterPro" id="IPR036376">
    <property type="entry name" value="RuBisCO_lsu_C_sf"/>
</dbReference>
<dbReference type="InterPro" id="IPR017443">
    <property type="entry name" value="RuBisCO_lsu_fd_N"/>
</dbReference>
<dbReference type="InterPro" id="IPR036422">
    <property type="entry name" value="RuBisCO_lsu_N_sf"/>
</dbReference>
<dbReference type="InterPro" id="IPR020888">
    <property type="entry name" value="RuBisCO_lsuI"/>
</dbReference>
<dbReference type="NCBIfam" id="NF003252">
    <property type="entry name" value="PRK04208.1"/>
    <property type="match status" value="1"/>
</dbReference>
<dbReference type="PANTHER" id="PTHR42704">
    <property type="entry name" value="RIBULOSE BISPHOSPHATE CARBOXYLASE"/>
    <property type="match status" value="1"/>
</dbReference>
<dbReference type="PANTHER" id="PTHR42704:SF17">
    <property type="entry name" value="RIBULOSE BISPHOSPHATE CARBOXYLASE LARGE CHAIN"/>
    <property type="match status" value="1"/>
</dbReference>
<dbReference type="Pfam" id="PF00016">
    <property type="entry name" value="RuBisCO_large"/>
    <property type="match status" value="1"/>
</dbReference>
<dbReference type="Pfam" id="PF02788">
    <property type="entry name" value="RuBisCO_large_N"/>
    <property type="match status" value="1"/>
</dbReference>
<dbReference type="SFLD" id="SFLDG01052">
    <property type="entry name" value="RuBisCO"/>
    <property type="match status" value="1"/>
</dbReference>
<dbReference type="SFLD" id="SFLDS00014">
    <property type="entry name" value="RuBisCO"/>
    <property type="match status" value="1"/>
</dbReference>
<dbReference type="SFLD" id="SFLDG00301">
    <property type="entry name" value="RuBisCO-like_proteins"/>
    <property type="match status" value="1"/>
</dbReference>
<dbReference type="SUPFAM" id="SSF51649">
    <property type="entry name" value="RuBisCo, C-terminal domain"/>
    <property type="match status" value="1"/>
</dbReference>
<dbReference type="SUPFAM" id="SSF54966">
    <property type="entry name" value="RuBisCO, large subunit, small (N-terminal) domain"/>
    <property type="match status" value="1"/>
</dbReference>
<dbReference type="PROSITE" id="PS00157">
    <property type="entry name" value="RUBISCO_LARGE"/>
    <property type="match status" value="1"/>
</dbReference>
<reference key="1">
    <citation type="journal article" date="1990" name="Proc. Natl. Acad. Sci. U.S.A.">
        <title>Nucleotide sequence and expression of a deep-sea ribulose-1,5-bisphosphate carboxylase gene cloned from a chemoautotrophic bacterial endosymbiont.</title>
        <authorList>
            <person name="Stein J.L."/>
            <person name="Haygood M."/>
            <person name="Felbeck H."/>
        </authorList>
    </citation>
    <scope>NUCLEOTIDE SEQUENCE [GENOMIC DNA]</scope>
</reference>
<sequence>MAKKYDAGVKDYRETYWMPDYTPKETDLLACFKIIPQPGVPREEARAAVAAESSTGTWTTVWTDLLTDLDHYKGRAYAIEDVPGDEEAFYAFIAYPIDLFEEGSVVNVFTSLVGNVFGFKAIRALRLEDVRFPIAYVMTCNGPPHGIQVERDIMNKYGRPLLGCTIKPKLGLSAKNYGRAVYECLRGGLDFTKDDENVNSQPFMRWRHGFDFVMEAIEKAERETGERKGHYLNVTAPTPDEMFKRAEYAKEIGAPIIMHDYITGGFTANTGLAQWCRDNGVLLHIHRAMHAVLDRNPHHGIHFRVLTKILRLSGGDHLHTGTVVGKLEGDREATLGWIDLLRESYIKEDRSRGIFFDQDWGSMPGVFAACSGGIHVWHMPALVTIFGEHAVLQFGGGTLGHPWGNAGAAANRVALEACVEARNEGHELEKEGKDILIQAAKHSPELKTAMETWKEIKFEFDTVDKLDVAHK</sequence>
<accession>P24672</accession>
<keyword id="KW-0113">Calvin cycle</keyword>
<keyword id="KW-0120">Carbon dioxide fixation</keyword>
<keyword id="KW-0456">Lyase</keyword>
<keyword id="KW-0460">Magnesium</keyword>
<keyword id="KW-0479">Metal-binding</keyword>
<keyword id="KW-0503">Monooxygenase</keyword>
<keyword id="KW-0560">Oxidoreductase</keyword>
<feature type="chain" id="PRO_0000062618" description="Ribulose bisphosphate carboxylase large chain">
    <location>
        <begin position="1"/>
        <end position="471"/>
    </location>
</feature>
<feature type="active site" description="Proton acceptor" evidence="1">
    <location>
        <position position="167"/>
    </location>
</feature>
<feature type="active site" description="Proton acceptor" evidence="1">
    <location>
        <position position="286"/>
    </location>
</feature>
<feature type="binding site" description="in homodimeric partner" evidence="1">
    <location>
        <position position="115"/>
    </location>
    <ligand>
        <name>substrate</name>
    </ligand>
</feature>
<feature type="binding site" evidence="1">
    <location>
        <position position="165"/>
    </location>
    <ligand>
        <name>substrate</name>
    </ligand>
</feature>
<feature type="binding site" evidence="1">
    <location>
        <position position="169"/>
    </location>
    <ligand>
        <name>substrate</name>
    </ligand>
</feature>
<feature type="binding site" description="via carbamate group" evidence="1">
    <location>
        <position position="193"/>
    </location>
    <ligand>
        <name>Mg(2+)</name>
        <dbReference type="ChEBI" id="CHEBI:18420"/>
    </ligand>
</feature>
<feature type="binding site" evidence="1">
    <location>
        <position position="195"/>
    </location>
    <ligand>
        <name>Mg(2+)</name>
        <dbReference type="ChEBI" id="CHEBI:18420"/>
    </ligand>
</feature>
<feature type="binding site" evidence="1">
    <location>
        <position position="196"/>
    </location>
    <ligand>
        <name>Mg(2+)</name>
        <dbReference type="ChEBI" id="CHEBI:18420"/>
    </ligand>
</feature>
<feature type="binding site" evidence="1">
    <location>
        <position position="287"/>
    </location>
    <ligand>
        <name>substrate</name>
    </ligand>
</feature>
<feature type="binding site" evidence="1">
    <location>
        <position position="319"/>
    </location>
    <ligand>
        <name>substrate</name>
    </ligand>
</feature>
<feature type="binding site" evidence="1">
    <location>
        <position position="371"/>
    </location>
    <ligand>
        <name>substrate</name>
    </ligand>
</feature>
<feature type="site" description="Transition state stabilizer" evidence="1">
    <location>
        <position position="326"/>
    </location>
</feature>
<feature type="modified residue" description="N6-carboxylysine" evidence="1">
    <location>
        <position position="193"/>
    </location>
</feature>
<name>RBL_ALVHS</name>
<gene>
    <name evidence="1" type="primary">cbbL</name>
    <name evidence="1" type="synonym">rbcL</name>
</gene>
<comment type="function">
    <text>RuBisCO catalyzes two reactions: the carboxylation of D-ribulose 1,5-bisphosphate, the primary event in carbon dioxide fixation, as well as the oxidative fragmentation of the pentose substrate. Both reactions occur simultaneously and in competition at the same active site.</text>
</comment>
<comment type="catalytic activity">
    <reaction evidence="1">
        <text>2 (2R)-3-phosphoglycerate + 2 H(+) = D-ribulose 1,5-bisphosphate + CO2 + H2O</text>
        <dbReference type="Rhea" id="RHEA:23124"/>
        <dbReference type="ChEBI" id="CHEBI:15377"/>
        <dbReference type="ChEBI" id="CHEBI:15378"/>
        <dbReference type="ChEBI" id="CHEBI:16526"/>
        <dbReference type="ChEBI" id="CHEBI:57870"/>
        <dbReference type="ChEBI" id="CHEBI:58272"/>
        <dbReference type="EC" id="4.1.1.39"/>
    </reaction>
</comment>
<comment type="catalytic activity">
    <reaction evidence="1">
        <text>D-ribulose 1,5-bisphosphate + O2 = 2-phosphoglycolate + (2R)-3-phosphoglycerate + 2 H(+)</text>
        <dbReference type="Rhea" id="RHEA:36631"/>
        <dbReference type="ChEBI" id="CHEBI:15378"/>
        <dbReference type="ChEBI" id="CHEBI:15379"/>
        <dbReference type="ChEBI" id="CHEBI:57870"/>
        <dbReference type="ChEBI" id="CHEBI:58033"/>
        <dbReference type="ChEBI" id="CHEBI:58272"/>
    </reaction>
</comment>
<comment type="cofactor">
    <cofactor evidence="1">
        <name>Mg(2+)</name>
        <dbReference type="ChEBI" id="CHEBI:18420"/>
    </cofactor>
    <text evidence="1">Binds 1 Mg(2+) ion per subunit.</text>
</comment>
<comment type="subunit">
    <text evidence="1">Heterohexadecamer of 8 large chains and 8 small chains.</text>
</comment>
<comment type="miscellaneous">
    <text evidence="1">The basic functional RuBisCO is composed of a large chain homodimer in a 'head-to-tail' conformation. In form I RuBisCO this homodimer is arranged in a barrel-like tetramer with the small subunits forming a tetrameric 'cap' on each end of the 'barrel'.</text>
</comment>
<comment type="similarity">
    <text evidence="1">Belongs to the RuBisCO large chain family. Type I subfamily.</text>
</comment>
<organism>
    <name type="scientific">Alvinoconcha hessleri symbiotic bacterium</name>
    <dbReference type="NCBI Taxonomy" id="2326"/>
    <lineage>
        <taxon>Bacteria</taxon>
        <taxon>Pseudomonadati</taxon>
        <taxon>Pseudomonadota</taxon>
        <taxon>Gammaproteobacteria</taxon>
        <taxon>sulfur-oxidizing symbionts</taxon>
    </lineage>
</organism>
<proteinExistence type="inferred from homology"/>
<evidence type="ECO:0000255" key="1">
    <source>
        <dbReference type="HAMAP-Rule" id="MF_01338"/>
    </source>
</evidence>